<organism>
    <name type="scientific">Yersinia pestis bv. Antiqua (strain Nepal516)</name>
    <dbReference type="NCBI Taxonomy" id="377628"/>
    <lineage>
        <taxon>Bacteria</taxon>
        <taxon>Pseudomonadati</taxon>
        <taxon>Pseudomonadota</taxon>
        <taxon>Gammaproteobacteria</taxon>
        <taxon>Enterobacterales</taxon>
        <taxon>Yersiniaceae</taxon>
        <taxon>Yersinia</taxon>
    </lineage>
</organism>
<evidence type="ECO:0000255" key="1">
    <source>
        <dbReference type="HAMAP-Rule" id="MF_00546"/>
    </source>
</evidence>
<evidence type="ECO:0000256" key="2">
    <source>
        <dbReference type="SAM" id="MobiDB-lite"/>
    </source>
</evidence>
<keyword id="KW-0574">Periplasm</keyword>
<keyword id="KW-0732">Signal</keyword>
<accession>Q1CKL2</accession>
<accession>C4GR79</accession>
<name>ASR_YERPN</name>
<sequence length="121" mass="12580">MKKVLALMVAATLGLSSVAFAADTTATATPAATSTTATVAAQTKATQHQKHKVTKKTTEQKAQAAKKHEKKASVQKTPVQKAQAAKKHVKKASVQKAPVQKAQAAKKHHKTAKKPVAAPAA</sequence>
<reference key="1">
    <citation type="journal article" date="2006" name="J. Bacteriol.">
        <title>Complete genome sequence of Yersinia pestis strains Antiqua and Nepal516: evidence of gene reduction in an emerging pathogen.</title>
        <authorList>
            <person name="Chain P.S.G."/>
            <person name="Hu P."/>
            <person name="Malfatti S.A."/>
            <person name="Radnedge L."/>
            <person name="Larimer F."/>
            <person name="Vergez L.M."/>
            <person name="Worsham P."/>
            <person name="Chu M.C."/>
            <person name="Andersen G.L."/>
        </authorList>
    </citation>
    <scope>NUCLEOTIDE SEQUENCE [LARGE SCALE GENOMIC DNA]</scope>
    <source>
        <strain>Nepal516</strain>
    </source>
</reference>
<reference key="2">
    <citation type="submission" date="2009-04" db="EMBL/GenBank/DDBJ databases">
        <title>Yersinia pestis Nepal516A whole genome shotgun sequencing project.</title>
        <authorList>
            <person name="Plunkett G. III"/>
            <person name="Anderson B.D."/>
            <person name="Baumler D.J."/>
            <person name="Burland V."/>
            <person name="Cabot E.L."/>
            <person name="Glasner J.D."/>
            <person name="Mau B."/>
            <person name="Neeno-Eckwall E."/>
            <person name="Perna N.T."/>
            <person name="Munk A.C."/>
            <person name="Tapia R."/>
            <person name="Green L.D."/>
            <person name="Rogers Y.C."/>
            <person name="Detter J.C."/>
            <person name="Bruce D.C."/>
            <person name="Brettin T.S."/>
        </authorList>
    </citation>
    <scope>NUCLEOTIDE SEQUENCE [LARGE SCALE GENOMIC DNA]</scope>
    <source>
        <strain>Nepal516</strain>
    </source>
</reference>
<feature type="signal peptide" evidence="1">
    <location>
        <begin position="1"/>
        <end position="21"/>
    </location>
</feature>
<feature type="propeptide" id="PRO_0000316046" evidence="1">
    <location>
        <begin position="22"/>
        <end position="63"/>
    </location>
</feature>
<feature type="chain" id="PRO_1000017754" description="Acid shock protein">
    <location>
        <begin position="64"/>
        <end position="121"/>
    </location>
</feature>
<feature type="region of interest" description="Disordered" evidence="2">
    <location>
        <begin position="40"/>
        <end position="121"/>
    </location>
</feature>
<feature type="compositionally biased region" description="Basic residues" evidence="2">
    <location>
        <begin position="84"/>
        <end position="93"/>
    </location>
</feature>
<feature type="compositionally biased region" description="Low complexity" evidence="2">
    <location>
        <begin position="94"/>
        <end position="103"/>
    </location>
</feature>
<feature type="compositionally biased region" description="Basic residues" evidence="2">
    <location>
        <begin position="104"/>
        <end position="113"/>
    </location>
</feature>
<dbReference type="EMBL" id="CP000305">
    <property type="protein sequence ID" value="ABG17468.1"/>
    <property type="molecule type" value="Genomic_DNA"/>
</dbReference>
<dbReference type="EMBL" id="ACNQ01000008">
    <property type="protein sequence ID" value="EEO77570.1"/>
    <property type="molecule type" value="Genomic_DNA"/>
</dbReference>
<dbReference type="RefSeq" id="WP_002212215.1">
    <property type="nucleotide sequence ID" value="NZ_ACNQ01000008.1"/>
</dbReference>
<dbReference type="GeneID" id="57976040"/>
<dbReference type="KEGG" id="ypn:YPN_1138"/>
<dbReference type="HOGENOM" id="CLU_102486_1_0_6"/>
<dbReference type="Proteomes" id="UP000008936">
    <property type="component" value="Chromosome"/>
</dbReference>
<dbReference type="GO" id="GO:0042597">
    <property type="term" value="C:periplasmic space"/>
    <property type="evidence" value="ECO:0007669"/>
    <property type="project" value="UniProtKB-SubCell"/>
</dbReference>
<dbReference type="HAMAP" id="MF_00546">
    <property type="entry name" value="Asr"/>
    <property type="match status" value="1"/>
</dbReference>
<dbReference type="InterPro" id="IPR023497">
    <property type="entry name" value="Acid_shock"/>
</dbReference>
<dbReference type="NCBIfam" id="NF033636">
    <property type="entry name" value="acid_shock_Asr"/>
    <property type="match status" value="1"/>
</dbReference>
<dbReference type="Pfam" id="PF06392">
    <property type="entry name" value="Asr"/>
    <property type="match status" value="1"/>
</dbReference>
<protein>
    <recommendedName>
        <fullName evidence="1">Acid shock protein</fullName>
    </recommendedName>
</protein>
<proteinExistence type="inferred from homology"/>
<comment type="function">
    <text evidence="1">Required for growth and/or survival at acidic conditions.</text>
</comment>
<comment type="subcellular location">
    <subcellularLocation>
        <location evidence="1">Periplasm</location>
    </subcellularLocation>
</comment>
<comment type="PTM">
    <text evidence="1">Proteolytic processing gives rise to the active protein.</text>
</comment>
<comment type="similarity">
    <text evidence="1">Belongs to the Asr family.</text>
</comment>
<gene>
    <name evidence="1" type="primary">asr</name>
    <name type="ordered locus">YPN_1138</name>
    <name type="ORF">YP516_1247</name>
</gene>